<evidence type="ECO:0000250" key="1"/>
<evidence type="ECO:0000250" key="2">
    <source>
        <dbReference type="UniProtKB" id="Q01159"/>
    </source>
</evidence>
<evidence type="ECO:0000256" key="3">
    <source>
        <dbReference type="SAM" id="MobiDB-lite"/>
    </source>
</evidence>
<evidence type="ECO:0000305" key="4"/>
<protein>
    <recommendedName>
        <fullName>mRNA-capping enzyme subunit alpha</fullName>
    </recommendedName>
    <alternativeName>
        <fullName>GTP--RNA guanylyltransferase</fullName>
        <shortName>GTase</shortName>
    </alternativeName>
    <alternativeName>
        <fullName>mRNA guanylyltransferase</fullName>
        <ecNumber evidence="2">2.7.7.50</ecNumber>
    </alternativeName>
</protein>
<proteinExistence type="inferred from homology"/>
<accession>Q6FQ31</accession>
<comment type="function">
    <text evidence="2">Second step of mRNA capping. Transfer of the GMP moiety of GTP to the 5'-end of RNA via an enzyme-GMP covalent reaction intermediate.</text>
</comment>
<comment type="catalytic activity">
    <reaction evidence="2">
        <text>a 5'-end diphospho-ribonucleoside in mRNA + GTP + H(+) = a 5'-end (5'-triphosphoguanosine)-ribonucleoside in mRNA + diphosphate</text>
        <dbReference type="Rhea" id="RHEA:67012"/>
        <dbReference type="Rhea" id="RHEA-COMP:17165"/>
        <dbReference type="Rhea" id="RHEA-COMP:17166"/>
        <dbReference type="ChEBI" id="CHEBI:15378"/>
        <dbReference type="ChEBI" id="CHEBI:33019"/>
        <dbReference type="ChEBI" id="CHEBI:37565"/>
        <dbReference type="ChEBI" id="CHEBI:167616"/>
        <dbReference type="ChEBI" id="CHEBI:167617"/>
        <dbReference type="EC" id="2.7.7.50"/>
    </reaction>
    <physiologicalReaction direction="left-to-right" evidence="2">
        <dbReference type="Rhea" id="RHEA:67013"/>
    </physiologicalReaction>
</comment>
<comment type="subunit">
    <text evidence="2">Heterodimer. The mRNA-capping enzyme is composed of two separate chains alpha and beta, respectively a mRNA guanylyltransferase and an mRNA 5'-triphosphate monophosphatase.</text>
</comment>
<comment type="subcellular location">
    <subcellularLocation>
        <location evidence="1">Nucleus</location>
    </subcellularLocation>
</comment>
<comment type="similarity">
    <text evidence="4">Belongs to the eukaryotic GTase family.</text>
</comment>
<organism>
    <name type="scientific">Candida glabrata (strain ATCC 2001 / BCRC 20586 / JCM 3761 / NBRC 0622 / NRRL Y-65 / CBS 138)</name>
    <name type="common">Yeast</name>
    <name type="synonym">Nakaseomyces glabratus</name>
    <dbReference type="NCBI Taxonomy" id="284593"/>
    <lineage>
        <taxon>Eukaryota</taxon>
        <taxon>Fungi</taxon>
        <taxon>Dikarya</taxon>
        <taxon>Ascomycota</taxon>
        <taxon>Saccharomycotina</taxon>
        <taxon>Saccharomycetes</taxon>
        <taxon>Saccharomycetales</taxon>
        <taxon>Saccharomycetaceae</taxon>
        <taxon>Nakaseomyces</taxon>
    </lineage>
</organism>
<sequence>MDARISPEIPGIIQPGNVTQDLKMLVCKLLNSPKPSKTFPGSQPVSFQHSDIRDKLVAQDYYVCEKTDGLRVLMLVVVNPITGEQGCFMIDRENNYYLVNGFHFPRLPQKKKEELLETSQNGTLIDGELVIQKNPMTKLQELRYLMFDCLAINGRSLVQSPTSSRLAHLGKEFYKPYYDLRSIYPDKCATFPFKLSMKHMDFSYSLVKVANSLDKLPHLSDGLIFTPVRTPYAVGGKDSLLLKWKPEQENSVDFKLILEIPMTEDNSVAKKDPRRWYYNYDAKPTFALYVWQGGSDVNTKLQNFEQPFDKREMQVLEKTYKRFAELSISDEQWQELKNLEEPLNGRIVECTKDPETGSWTMLRFRDDKLNGNHTSVVQKVLESISDSVTIDDLAESVPEIKSAWDERKNGAYQHHSSSFSESRQQPKAEPVAEKKQTEPKYVDDDDWSD</sequence>
<name>MCE1_CANGA</name>
<dbReference type="EC" id="2.7.7.50" evidence="2"/>
<dbReference type="EMBL" id="CR380955">
    <property type="protein sequence ID" value="CAG60600.1"/>
    <property type="molecule type" value="Genomic_DNA"/>
</dbReference>
<dbReference type="RefSeq" id="XP_447663.1">
    <property type="nucleotide sequence ID" value="XM_447663.1"/>
</dbReference>
<dbReference type="SMR" id="Q6FQ31"/>
<dbReference type="FunCoup" id="Q6FQ31">
    <property type="interactions" value="464"/>
</dbReference>
<dbReference type="STRING" id="284593.Q6FQ31"/>
<dbReference type="EnsemblFungi" id="CAGL0I09570g-T">
    <property type="protein sequence ID" value="CAGL0I09570g-T-p1"/>
    <property type="gene ID" value="CAGL0I09570g"/>
</dbReference>
<dbReference type="KEGG" id="cgr:2888936"/>
<dbReference type="CGD" id="CAL0132534">
    <property type="gene designation" value="CAGL0I09570g"/>
</dbReference>
<dbReference type="VEuPathDB" id="FungiDB:CAGL0I09570g"/>
<dbReference type="eggNOG" id="KOG2386">
    <property type="taxonomic scope" value="Eukaryota"/>
</dbReference>
<dbReference type="HOGENOM" id="CLU_021710_0_2_1"/>
<dbReference type="InParanoid" id="Q6FQ31"/>
<dbReference type="OMA" id="KDYYVCE"/>
<dbReference type="Proteomes" id="UP000002428">
    <property type="component" value="Chromosome I"/>
</dbReference>
<dbReference type="GO" id="GO:0031533">
    <property type="term" value="C:mRNA capping enzyme complex"/>
    <property type="evidence" value="ECO:0007669"/>
    <property type="project" value="EnsemblFungi"/>
</dbReference>
<dbReference type="GO" id="GO:0005524">
    <property type="term" value="F:ATP binding"/>
    <property type="evidence" value="ECO:0007669"/>
    <property type="project" value="InterPro"/>
</dbReference>
<dbReference type="GO" id="GO:0005525">
    <property type="term" value="F:GTP binding"/>
    <property type="evidence" value="ECO:0007669"/>
    <property type="project" value="UniProtKB-KW"/>
</dbReference>
<dbReference type="GO" id="GO:0004484">
    <property type="term" value="F:mRNA guanylyltransferase activity"/>
    <property type="evidence" value="ECO:0007669"/>
    <property type="project" value="UniProtKB-EC"/>
</dbReference>
<dbReference type="GO" id="GO:0099122">
    <property type="term" value="F:RNA polymerase II C-terminal domain binding"/>
    <property type="evidence" value="ECO:0007669"/>
    <property type="project" value="EnsemblFungi"/>
</dbReference>
<dbReference type="GO" id="GO:0006370">
    <property type="term" value="P:7-methylguanosine mRNA capping"/>
    <property type="evidence" value="ECO:0007669"/>
    <property type="project" value="UniProtKB-KW"/>
</dbReference>
<dbReference type="GO" id="GO:0045944">
    <property type="term" value="P:positive regulation of transcription by RNA polymerase II"/>
    <property type="evidence" value="ECO:0007669"/>
    <property type="project" value="EnsemblFungi"/>
</dbReference>
<dbReference type="GO" id="GO:0008033">
    <property type="term" value="P:tRNA processing"/>
    <property type="evidence" value="ECO:0007669"/>
    <property type="project" value="EnsemblFungi"/>
</dbReference>
<dbReference type="CDD" id="cd07895">
    <property type="entry name" value="Adenylation_mRNA_capping"/>
    <property type="match status" value="1"/>
</dbReference>
<dbReference type="FunFam" id="2.40.50.140:FF:000253">
    <property type="entry name" value="mRNA-capping enzyme subunit alpha"/>
    <property type="match status" value="1"/>
</dbReference>
<dbReference type="FunFam" id="3.30.470.30:FF:000011">
    <property type="entry name" value="mRNA-capping enzyme subunit alpha"/>
    <property type="match status" value="1"/>
</dbReference>
<dbReference type="Gene3D" id="3.30.470.30">
    <property type="entry name" value="DNA ligase/mRNA capping enzyme"/>
    <property type="match status" value="1"/>
</dbReference>
<dbReference type="Gene3D" id="2.40.50.140">
    <property type="entry name" value="Nucleic acid-binding proteins"/>
    <property type="match status" value="1"/>
</dbReference>
<dbReference type="InterPro" id="IPR001339">
    <property type="entry name" value="mRNA_cap_enzyme_adenylation"/>
</dbReference>
<dbReference type="InterPro" id="IPR017075">
    <property type="entry name" value="mRNA_cap_enzyme_alpha"/>
</dbReference>
<dbReference type="InterPro" id="IPR013846">
    <property type="entry name" value="mRNA_cap_enzyme_C"/>
</dbReference>
<dbReference type="InterPro" id="IPR051029">
    <property type="entry name" value="mRNA_Capping_Enz/RNA_Phosphat"/>
</dbReference>
<dbReference type="InterPro" id="IPR012340">
    <property type="entry name" value="NA-bd_OB-fold"/>
</dbReference>
<dbReference type="PANTHER" id="PTHR10367">
    <property type="entry name" value="MRNA-CAPPING ENZYME"/>
    <property type="match status" value="1"/>
</dbReference>
<dbReference type="PANTHER" id="PTHR10367:SF17">
    <property type="entry name" value="MRNA-CAPPING ENZYME"/>
    <property type="match status" value="1"/>
</dbReference>
<dbReference type="Pfam" id="PF03919">
    <property type="entry name" value="mRNA_cap_C"/>
    <property type="match status" value="1"/>
</dbReference>
<dbReference type="Pfam" id="PF01331">
    <property type="entry name" value="mRNA_cap_enzyme"/>
    <property type="match status" value="1"/>
</dbReference>
<dbReference type="PIRSF" id="PIRSF036959">
    <property type="entry name" value="mRNA_cap_alpha"/>
    <property type="match status" value="1"/>
</dbReference>
<dbReference type="SUPFAM" id="SSF56091">
    <property type="entry name" value="DNA ligase/mRNA capping enzyme, catalytic domain"/>
    <property type="match status" value="1"/>
</dbReference>
<dbReference type="SUPFAM" id="SSF50249">
    <property type="entry name" value="Nucleic acid-binding proteins"/>
    <property type="match status" value="1"/>
</dbReference>
<gene>
    <name type="primary">CEG1</name>
    <name type="ordered locus">CAGL0I09570g</name>
</gene>
<feature type="chain" id="PRO_0000210100" description="mRNA-capping enzyme subunit alpha">
    <location>
        <begin position="1"/>
        <end position="449"/>
    </location>
</feature>
<feature type="region of interest" description="Disordered" evidence="3">
    <location>
        <begin position="405"/>
        <end position="449"/>
    </location>
</feature>
<feature type="compositionally biased region" description="Polar residues" evidence="3">
    <location>
        <begin position="414"/>
        <end position="423"/>
    </location>
</feature>
<feature type="compositionally biased region" description="Basic and acidic residues" evidence="3">
    <location>
        <begin position="424"/>
        <end position="442"/>
    </location>
</feature>
<feature type="active site" description="N6-GMP-lysine intermediate" evidence="1">
    <location>
        <position position="66"/>
    </location>
</feature>
<keyword id="KW-0342">GTP-binding</keyword>
<keyword id="KW-0506">mRNA capping</keyword>
<keyword id="KW-0507">mRNA processing</keyword>
<keyword id="KW-0547">Nucleotide-binding</keyword>
<keyword id="KW-0548">Nucleotidyltransferase</keyword>
<keyword id="KW-0539">Nucleus</keyword>
<keyword id="KW-1185">Reference proteome</keyword>
<keyword id="KW-0808">Transferase</keyword>
<reference key="1">
    <citation type="journal article" date="2004" name="Nature">
        <title>Genome evolution in yeasts.</title>
        <authorList>
            <person name="Dujon B."/>
            <person name="Sherman D."/>
            <person name="Fischer G."/>
            <person name="Durrens P."/>
            <person name="Casaregola S."/>
            <person name="Lafontaine I."/>
            <person name="de Montigny J."/>
            <person name="Marck C."/>
            <person name="Neuveglise C."/>
            <person name="Talla E."/>
            <person name="Goffard N."/>
            <person name="Frangeul L."/>
            <person name="Aigle M."/>
            <person name="Anthouard V."/>
            <person name="Babour A."/>
            <person name="Barbe V."/>
            <person name="Barnay S."/>
            <person name="Blanchin S."/>
            <person name="Beckerich J.-M."/>
            <person name="Beyne E."/>
            <person name="Bleykasten C."/>
            <person name="Boisrame A."/>
            <person name="Boyer J."/>
            <person name="Cattolico L."/>
            <person name="Confanioleri F."/>
            <person name="de Daruvar A."/>
            <person name="Despons L."/>
            <person name="Fabre E."/>
            <person name="Fairhead C."/>
            <person name="Ferry-Dumazet H."/>
            <person name="Groppi A."/>
            <person name="Hantraye F."/>
            <person name="Hennequin C."/>
            <person name="Jauniaux N."/>
            <person name="Joyet P."/>
            <person name="Kachouri R."/>
            <person name="Kerrest A."/>
            <person name="Koszul R."/>
            <person name="Lemaire M."/>
            <person name="Lesur I."/>
            <person name="Ma L."/>
            <person name="Muller H."/>
            <person name="Nicaud J.-M."/>
            <person name="Nikolski M."/>
            <person name="Oztas S."/>
            <person name="Ozier-Kalogeropoulos O."/>
            <person name="Pellenz S."/>
            <person name="Potier S."/>
            <person name="Richard G.-F."/>
            <person name="Straub M.-L."/>
            <person name="Suleau A."/>
            <person name="Swennen D."/>
            <person name="Tekaia F."/>
            <person name="Wesolowski-Louvel M."/>
            <person name="Westhof E."/>
            <person name="Wirth B."/>
            <person name="Zeniou-Meyer M."/>
            <person name="Zivanovic Y."/>
            <person name="Bolotin-Fukuhara M."/>
            <person name="Thierry A."/>
            <person name="Bouchier C."/>
            <person name="Caudron B."/>
            <person name="Scarpelli C."/>
            <person name="Gaillardin C."/>
            <person name="Weissenbach J."/>
            <person name="Wincker P."/>
            <person name="Souciet J.-L."/>
        </authorList>
    </citation>
    <scope>NUCLEOTIDE SEQUENCE [LARGE SCALE GENOMIC DNA]</scope>
    <source>
        <strain>ATCC 2001 / BCRC 20586 / JCM 3761 / NBRC 0622 / NRRL Y-65 / CBS 138</strain>
    </source>
</reference>